<dbReference type="EC" id="3.1.2.6" evidence="1"/>
<dbReference type="EMBL" id="CP000127">
    <property type="protein sequence ID" value="ABA58222.1"/>
    <property type="molecule type" value="Genomic_DNA"/>
</dbReference>
<dbReference type="RefSeq" id="WP_002809635.1">
    <property type="nucleotide sequence ID" value="NC_007484.1"/>
</dbReference>
<dbReference type="SMR" id="Q3JAC4"/>
<dbReference type="FunCoup" id="Q3JAC4">
    <property type="interactions" value="355"/>
</dbReference>
<dbReference type="STRING" id="323261.Noc_1750"/>
<dbReference type="KEGG" id="noc:Noc_1750"/>
<dbReference type="eggNOG" id="COG0491">
    <property type="taxonomic scope" value="Bacteria"/>
</dbReference>
<dbReference type="HOGENOM" id="CLU_030571_4_1_6"/>
<dbReference type="InParanoid" id="Q3JAC4"/>
<dbReference type="UniPathway" id="UPA00619">
    <property type="reaction ID" value="UER00676"/>
</dbReference>
<dbReference type="Proteomes" id="UP000006838">
    <property type="component" value="Chromosome"/>
</dbReference>
<dbReference type="GO" id="GO:0004416">
    <property type="term" value="F:hydroxyacylglutathione hydrolase activity"/>
    <property type="evidence" value="ECO:0007669"/>
    <property type="project" value="UniProtKB-UniRule"/>
</dbReference>
<dbReference type="GO" id="GO:0046872">
    <property type="term" value="F:metal ion binding"/>
    <property type="evidence" value="ECO:0007669"/>
    <property type="project" value="UniProtKB-KW"/>
</dbReference>
<dbReference type="GO" id="GO:0019243">
    <property type="term" value="P:methylglyoxal catabolic process to D-lactate via S-lactoyl-glutathione"/>
    <property type="evidence" value="ECO:0007669"/>
    <property type="project" value="InterPro"/>
</dbReference>
<dbReference type="CDD" id="cd07723">
    <property type="entry name" value="hydroxyacylglutathione_hydrolase_MBL-fold"/>
    <property type="match status" value="1"/>
</dbReference>
<dbReference type="Gene3D" id="3.60.15.10">
    <property type="entry name" value="Ribonuclease Z/Hydroxyacylglutathione hydrolase-like"/>
    <property type="match status" value="1"/>
</dbReference>
<dbReference type="HAMAP" id="MF_01374">
    <property type="entry name" value="Glyoxalase_2"/>
    <property type="match status" value="1"/>
</dbReference>
<dbReference type="InterPro" id="IPR035680">
    <property type="entry name" value="Clx_II_MBL"/>
</dbReference>
<dbReference type="InterPro" id="IPR050110">
    <property type="entry name" value="Glyoxalase_II_hydrolase"/>
</dbReference>
<dbReference type="InterPro" id="IPR032282">
    <property type="entry name" value="HAGH_C"/>
</dbReference>
<dbReference type="InterPro" id="IPR017782">
    <property type="entry name" value="Hydroxyacylglutathione_Hdrlase"/>
</dbReference>
<dbReference type="InterPro" id="IPR001279">
    <property type="entry name" value="Metallo-B-lactamas"/>
</dbReference>
<dbReference type="InterPro" id="IPR036866">
    <property type="entry name" value="RibonucZ/Hydroxyglut_hydro"/>
</dbReference>
<dbReference type="PANTHER" id="PTHR43705">
    <property type="entry name" value="HYDROXYACYLGLUTATHIONE HYDROLASE"/>
    <property type="match status" value="1"/>
</dbReference>
<dbReference type="PANTHER" id="PTHR43705:SF1">
    <property type="entry name" value="HYDROXYACYLGLUTATHIONE HYDROLASE GLOB"/>
    <property type="match status" value="1"/>
</dbReference>
<dbReference type="Pfam" id="PF16123">
    <property type="entry name" value="HAGH_C"/>
    <property type="match status" value="1"/>
</dbReference>
<dbReference type="Pfam" id="PF00753">
    <property type="entry name" value="Lactamase_B"/>
    <property type="match status" value="1"/>
</dbReference>
<dbReference type="SMART" id="SM00849">
    <property type="entry name" value="Lactamase_B"/>
    <property type="match status" value="1"/>
</dbReference>
<dbReference type="SUPFAM" id="SSF56281">
    <property type="entry name" value="Metallo-hydrolase/oxidoreductase"/>
    <property type="match status" value="1"/>
</dbReference>
<comment type="function">
    <text evidence="1">Thiolesterase that catalyzes the hydrolysis of S-D-lactoyl-glutathione to form glutathione and D-lactic acid.</text>
</comment>
<comment type="catalytic activity">
    <reaction evidence="1">
        <text>an S-(2-hydroxyacyl)glutathione + H2O = a 2-hydroxy carboxylate + glutathione + H(+)</text>
        <dbReference type="Rhea" id="RHEA:21864"/>
        <dbReference type="ChEBI" id="CHEBI:15377"/>
        <dbReference type="ChEBI" id="CHEBI:15378"/>
        <dbReference type="ChEBI" id="CHEBI:57925"/>
        <dbReference type="ChEBI" id="CHEBI:58896"/>
        <dbReference type="ChEBI" id="CHEBI:71261"/>
        <dbReference type="EC" id="3.1.2.6"/>
    </reaction>
</comment>
<comment type="cofactor">
    <cofactor evidence="1">
        <name>Zn(2+)</name>
        <dbReference type="ChEBI" id="CHEBI:29105"/>
    </cofactor>
    <text evidence="1">Binds 2 Zn(2+) ions per subunit.</text>
</comment>
<comment type="pathway">
    <text evidence="1">Secondary metabolite metabolism; methylglyoxal degradation; (R)-lactate from methylglyoxal: step 2/2.</text>
</comment>
<comment type="subunit">
    <text evidence="1">Monomer.</text>
</comment>
<comment type="similarity">
    <text evidence="1">Belongs to the metallo-beta-lactamase superfamily. Glyoxalase II family.</text>
</comment>
<feature type="chain" id="PRO_0000309668" description="Hydroxyacylglutathione hydrolase">
    <location>
        <begin position="1"/>
        <end position="263"/>
    </location>
</feature>
<feature type="binding site" evidence="1">
    <location>
        <position position="56"/>
    </location>
    <ligand>
        <name>Zn(2+)</name>
        <dbReference type="ChEBI" id="CHEBI:29105"/>
        <label>1</label>
    </ligand>
</feature>
<feature type="binding site" evidence="1">
    <location>
        <position position="58"/>
    </location>
    <ligand>
        <name>Zn(2+)</name>
        <dbReference type="ChEBI" id="CHEBI:29105"/>
        <label>1</label>
    </ligand>
</feature>
<feature type="binding site" evidence="1">
    <location>
        <position position="60"/>
    </location>
    <ligand>
        <name>Zn(2+)</name>
        <dbReference type="ChEBI" id="CHEBI:29105"/>
        <label>2</label>
    </ligand>
</feature>
<feature type="binding site" evidence="1">
    <location>
        <position position="61"/>
    </location>
    <ligand>
        <name>Zn(2+)</name>
        <dbReference type="ChEBI" id="CHEBI:29105"/>
        <label>2</label>
    </ligand>
</feature>
<feature type="binding site" evidence="1">
    <location>
        <position position="115"/>
    </location>
    <ligand>
        <name>Zn(2+)</name>
        <dbReference type="ChEBI" id="CHEBI:29105"/>
        <label>1</label>
    </ligand>
</feature>
<feature type="binding site" evidence="1">
    <location>
        <position position="135"/>
    </location>
    <ligand>
        <name>Zn(2+)</name>
        <dbReference type="ChEBI" id="CHEBI:29105"/>
        <label>1</label>
    </ligand>
</feature>
<feature type="binding site" evidence="1">
    <location>
        <position position="135"/>
    </location>
    <ligand>
        <name>Zn(2+)</name>
        <dbReference type="ChEBI" id="CHEBI:29105"/>
        <label>2</label>
    </ligand>
</feature>
<feature type="binding site" evidence="1">
    <location>
        <position position="175"/>
    </location>
    <ligand>
        <name>Zn(2+)</name>
        <dbReference type="ChEBI" id="CHEBI:29105"/>
        <label>2</label>
    </ligand>
</feature>
<keyword id="KW-0378">Hydrolase</keyword>
<keyword id="KW-0479">Metal-binding</keyword>
<keyword id="KW-1185">Reference proteome</keyword>
<keyword id="KW-0862">Zinc</keyword>
<reference key="1">
    <citation type="journal article" date="2006" name="Appl. Environ. Microbiol.">
        <title>Complete genome sequence of the marine, chemolithoautotrophic, ammonia-oxidizing bacterium Nitrosococcus oceani ATCC 19707.</title>
        <authorList>
            <person name="Klotz M.G."/>
            <person name="Arp D.J."/>
            <person name="Chain P.S.G."/>
            <person name="El-Sheikh A.F."/>
            <person name="Hauser L.J."/>
            <person name="Hommes N.G."/>
            <person name="Larimer F.W."/>
            <person name="Malfatti S.A."/>
            <person name="Norton J.M."/>
            <person name="Poret-Peterson A.T."/>
            <person name="Vergez L.M."/>
            <person name="Ward B.B."/>
        </authorList>
    </citation>
    <scope>NUCLEOTIDE SEQUENCE [LARGE SCALE GENOMIC DNA]</scope>
    <source>
        <strain>ATCC 19707 / BCRC 17464 / JCM 30415 / NCIMB 11848 / C-107</strain>
    </source>
</reference>
<sequence length="263" mass="29189">MLIEQLWTANAYRNFNYLIACPETGEALAIDPLDHRQCLATAKRNGWRITQIFNTHEHGDHTGGNEAIIAQTKGKLLAHHKARDKIRGIDEGLAAGDTVKVGNGVALKVLDTPGHTMSHLCLFAPSNPPALFCGDTLFNAGAGNCHNGGDPNALYATFTQQLALLPCNTRIYPGHEYIENNLGFTLDREPDNEQAMALLAEVKSQDPNHAFVSTLALEKEINTFFRLDNPTLITKLRETFPDLPRVPDPKTVFLKLRELRNKW</sequence>
<gene>
    <name evidence="1" type="primary">gloB</name>
    <name type="ordered locus">Noc_1750</name>
</gene>
<organism>
    <name type="scientific">Nitrosococcus oceani (strain ATCC 19707 / BCRC 17464 / JCM 30415 / NCIMB 11848 / C-107)</name>
    <dbReference type="NCBI Taxonomy" id="323261"/>
    <lineage>
        <taxon>Bacteria</taxon>
        <taxon>Pseudomonadati</taxon>
        <taxon>Pseudomonadota</taxon>
        <taxon>Gammaproteobacteria</taxon>
        <taxon>Chromatiales</taxon>
        <taxon>Chromatiaceae</taxon>
        <taxon>Nitrosococcus</taxon>
    </lineage>
</organism>
<accession>Q3JAC4</accession>
<name>GLO2_NITOC</name>
<protein>
    <recommendedName>
        <fullName evidence="1">Hydroxyacylglutathione hydrolase</fullName>
        <ecNumber evidence="1">3.1.2.6</ecNumber>
    </recommendedName>
    <alternativeName>
        <fullName evidence="1">Glyoxalase II</fullName>
        <shortName evidence="1">Glx II</shortName>
    </alternativeName>
</protein>
<proteinExistence type="inferred from homology"/>
<evidence type="ECO:0000255" key="1">
    <source>
        <dbReference type="HAMAP-Rule" id="MF_01374"/>
    </source>
</evidence>